<gene>
    <name type="primary">rpc19</name>
    <name type="synonym">rpa17</name>
    <name type="ORF">SPAC1687.01</name>
    <name type="ORF">SPAPYUL23.01</name>
</gene>
<accession>Q09177</accession>
<accession>Q9UUF9</accession>
<proteinExistence type="evidence at protein level"/>
<dbReference type="EMBL" id="U50769">
    <property type="protein sequence ID" value="AAC49604.1"/>
    <property type="molecule type" value="mRNA"/>
</dbReference>
<dbReference type="EMBL" id="AB013499">
    <property type="protein sequence ID" value="BAA33719.1"/>
    <property type="molecule type" value="mRNA"/>
</dbReference>
<dbReference type="EMBL" id="AF116919">
    <property type="protein sequence ID" value="AAF24657.1"/>
    <property type="molecule type" value="Genomic_DNA"/>
</dbReference>
<dbReference type="EMBL" id="AF079779">
    <property type="protein sequence ID" value="AAD45538.1"/>
    <property type="molecule type" value="mRNA"/>
</dbReference>
<dbReference type="EMBL" id="AB017152">
    <property type="protein sequence ID" value="BAA36760.1"/>
    <property type="molecule type" value="Genomic_DNA"/>
</dbReference>
<dbReference type="EMBL" id="CU329670">
    <property type="protein sequence ID" value="CAB50921.2"/>
    <property type="molecule type" value="Genomic_DNA"/>
</dbReference>
<dbReference type="PIR" id="T43414">
    <property type="entry name" value="T43414"/>
</dbReference>
<dbReference type="RefSeq" id="NP_593118.2">
    <property type="nucleotide sequence ID" value="NM_001018515.2"/>
</dbReference>
<dbReference type="PDB" id="7AOC">
    <property type="method" value="EM"/>
    <property type="resolution" value="3.84 A"/>
    <property type="chains" value="K=1-125"/>
</dbReference>
<dbReference type="PDB" id="7AOD">
    <property type="method" value="EM"/>
    <property type="resolution" value="4.50 A"/>
    <property type="chains" value="K/W=1-125"/>
</dbReference>
<dbReference type="PDB" id="7AOE">
    <property type="method" value="EM"/>
    <property type="resolution" value="3.90 A"/>
    <property type="chains" value="K=1-125"/>
</dbReference>
<dbReference type="PDBsum" id="7AOC"/>
<dbReference type="PDBsum" id="7AOD"/>
<dbReference type="PDBsum" id="7AOE"/>
<dbReference type="EMDB" id="EMD-11840"/>
<dbReference type="EMDB" id="EMD-11841"/>
<dbReference type="EMDB" id="EMD-11842"/>
<dbReference type="SMR" id="Q09177"/>
<dbReference type="BioGRID" id="279247">
    <property type="interactions" value="8"/>
</dbReference>
<dbReference type="ComplexPortal" id="CPX-8905">
    <property type="entry name" value="DNA-directed RNA polymerase III complex"/>
</dbReference>
<dbReference type="ComplexPortal" id="CPX-8907">
    <property type="entry name" value="DNA-directed RNA polymerase I complex"/>
</dbReference>
<dbReference type="FunCoup" id="Q09177">
    <property type="interactions" value="239"/>
</dbReference>
<dbReference type="STRING" id="284812.Q09177"/>
<dbReference type="iPTMnet" id="Q09177"/>
<dbReference type="PaxDb" id="4896-SPAC1687.01.1"/>
<dbReference type="EnsemblFungi" id="SPAC1687.01.1">
    <property type="protein sequence ID" value="SPAC1687.01.1:pep"/>
    <property type="gene ID" value="SPAC1687.01"/>
</dbReference>
<dbReference type="GeneID" id="2542799"/>
<dbReference type="KEGG" id="spo:2542799"/>
<dbReference type="PomBase" id="SPAC1687.01">
    <property type="gene designation" value="rpc19"/>
</dbReference>
<dbReference type="VEuPathDB" id="FungiDB:SPAC1687.01"/>
<dbReference type="eggNOG" id="KOG3438">
    <property type="taxonomic scope" value="Eukaryota"/>
</dbReference>
<dbReference type="HOGENOM" id="CLU_090381_3_0_1"/>
<dbReference type="InParanoid" id="Q09177"/>
<dbReference type="OMA" id="MRIQMYD"/>
<dbReference type="PhylomeDB" id="Q09177"/>
<dbReference type="PRO" id="PR:Q09177"/>
<dbReference type="Proteomes" id="UP000002485">
    <property type="component" value="Chromosome I"/>
</dbReference>
<dbReference type="GO" id="GO:0005736">
    <property type="term" value="C:RNA polymerase I complex"/>
    <property type="evidence" value="ECO:0000314"/>
    <property type="project" value="PomBase"/>
</dbReference>
<dbReference type="GO" id="GO:0005666">
    <property type="term" value="C:RNA polymerase III complex"/>
    <property type="evidence" value="ECO:0000316"/>
    <property type="project" value="PomBase"/>
</dbReference>
<dbReference type="GO" id="GO:0003677">
    <property type="term" value="F:DNA binding"/>
    <property type="evidence" value="ECO:0007669"/>
    <property type="project" value="InterPro"/>
</dbReference>
<dbReference type="GO" id="GO:0003899">
    <property type="term" value="F:DNA-directed RNA polymerase activity"/>
    <property type="evidence" value="ECO:0007669"/>
    <property type="project" value="InterPro"/>
</dbReference>
<dbReference type="GO" id="GO:0046983">
    <property type="term" value="F:protein dimerization activity"/>
    <property type="evidence" value="ECO:0007669"/>
    <property type="project" value="InterPro"/>
</dbReference>
<dbReference type="GO" id="GO:0006360">
    <property type="term" value="P:transcription by RNA polymerase I"/>
    <property type="evidence" value="ECO:0000316"/>
    <property type="project" value="PomBase"/>
</dbReference>
<dbReference type="GO" id="GO:0006383">
    <property type="term" value="P:transcription by RNA polymerase III"/>
    <property type="evidence" value="ECO:0000316"/>
    <property type="project" value="PomBase"/>
</dbReference>
<dbReference type="GO" id="GO:0006362">
    <property type="term" value="P:transcription elongation by RNA polymerase I"/>
    <property type="evidence" value="ECO:0000269"/>
    <property type="project" value="PomBase"/>
</dbReference>
<dbReference type="CDD" id="cd07029">
    <property type="entry name" value="RNAP_I_III_AC19"/>
    <property type="match status" value="1"/>
</dbReference>
<dbReference type="FunFam" id="3.30.1360.10:FF:000006">
    <property type="entry name" value="DNA-directed RNA polymerases I and III subunit RPAC2"/>
    <property type="match status" value="1"/>
</dbReference>
<dbReference type="Gene3D" id="3.30.1360.10">
    <property type="entry name" value="RNA polymerase, RBP11-like subunit"/>
    <property type="match status" value="1"/>
</dbReference>
<dbReference type="HAMAP" id="MF_00261">
    <property type="entry name" value="RNApol_arch_Rpo11"/>
    <property type="match status" value="1"/>
</dbReference>
<dbReference type="InterPro" id="IPR036603">
    <property type="entry name" value="RBP11-like"/>
</dbReference>
<dbReference type="InterPro" id="IPR009025">
    <property type="entry name" value="RBP11-like_dimer"/>
</dbReference>
<dbReference type="InterPro" id="IPR008193">
    <property type="entry name" value="RNA_pol_Rpb11_13-16kDa_CS"/>
</dbReference>
<dbReference type="InterPro" id="IPR033898">
    <property type="entry name" value="RNAP_AC19"/>
</dbReference>
<dbReference type="InterPro" id="IPR022905">
    <property type="entry name" value="Rpo11-like"/>
</dbReference>
<dbReference type="PANTHER" id="PTHR13946">
    <property type="entry name" value="DNA-DIRECTED RNA POLYMERASE I,II,III"/>
    <property type="match status" value="1"/>
</dbReference>
<dbReference type="PANTHER" id="PTHR13946:SF28">
    <property type="entry name" value="DNA-DIRECTED RNA POLYMERASES I AND III SUBUNIT RPAC2"/>
    <property type="match status" value="1"/>
</dbReference>
<dbReference type="Pfam" id="PF13656">
    <property type="entry name" value="RNA_pol_L_2"/>
    <property type="match status" value="1"/>
</dbReference>
<dbReference type="SUPFAM" id="SSF55257">
    <property type="entry name" value="RBP11-like subunits of RNA polymerase"/>
    <property type="match status" value="1"/>
</dbReference>
<dbReference type="PROSITE" id="PS01154">
    <property type="entry name" value="RNA_POL_L_13KD"/>
    <property type="match status" value="1"/>
</dbReference>
<feature type="chain" id="PRO_0000149318" description="DNA-directed RNA polymerases I and III subunit RPAC2">
    <location>
        <begin position="1"/>
        <end position="125"/>
    </location>
</feature>
<sequence length="125" mass="13722">MAAMTDVTDPSSVAMESATEKIIILPGHSADLTSVTFQIQKEDHTLGNSLRYVIMKNPEVEFCGYSIPHPSEAKMNFRIQTAPSTTAVDVLRKGLDDLIDLCDAVTEKFTEQLPRDTSTTMEVDG</sequence>
<name>RPAC2_SCHPO</name>
<organism>
    <name type="scientific">Schizosaccharomyces pombe (strain 972 / ATCC 24843)</name>
    <name type="common">Fission yeast</name>
    <dbReference type="NCBI Taxonomy" id="284812"/>
    <lineage>
        <taxon>Eukaryota</taxon>
        <taxon>Fungi</taxon>
        <taxon>Dikarya</taxon>
        <taxon>Ascomycota</taxon>
        <taxon>Taphrinomycotina</taxon>
        <taxon>Schizosaccharomycetes</taxon>
        <taxon>Schizosaccharomycetales</taxon>
        <taxon>Schizosaccharomycetaceae</taxon>
        <taxon>Schizosaccharomyces</taxon>
    </lineage>
</organism>
<evidence type="ECO:0000250" key="1"/>
<evidence type="ECO:0000305" key="2"/>
<comment type="function">
    <text>DNA-dependent RNA polymerase catalyzes the transcription of DNA into RNA using the four ribonucleoside triphosphates as substrates. Common core component of RNA polymerases I and III which synthesize ribosomal RNA precursors and small RNAs, such as 5S rRNA and tRNAs, respectively.</text>
</comment>
<comment type="subunit">
    <text evidence="1">Component of the RNA polymerase I (Pol I) and RNA polymerase III (Pol III) complexes consisting of 14 and 17 subunits, respectively.</text>
</comment>
<comment type="subcellular location">
    <subcellularLocation>
        <location evidence="1">Nucleus</location>
    </subcellularLocation>
</comment>
<comment type="similarity">
    <text evidence="2">Belongs to the archaeal Rpo11/eukaryotic RPB11/RPC19 RNA polymerase subunit family.</text>
</comment>
<protein>
    <recommendedName>
        <fullName>DNA-directed RNA polymerases I and III subunit RPAC2</fullName>
        <shortName>RNA polymerases I and III subunit AC2</shortName>
    </recommendedName>
    <alternativeName>
        <fullName>AC19</fullName>
    </alternativeName>
    <alternativeName>
        <fullName>DNA-directed RNA polymerases I and III 14 kDa polypeptide</fullName>
    </alternativeName>
</protein>
<keyword id="KW-0002">3D-structure</keyword>
<keyword id="KW-0240">DNA-directed RNA polymerase</keyword>
<keyword id="KW-0539">Nucleus</keyword>
<keyword id="KW-1185">Reference proteome</keyword>
<keyword id="KW-0804">Transcription</keyword>
<reference key="1">
    <citation type="journal article" date="1996" name="Nucleic Acids Res.">
        <title>Fission yeast genes which disrupt mitotic chromosome segregation when overexpressed.</title>
        <authorList>
            <person name="Javerzat J.-P."/>
            <person name="Cranston G."/>
            <person name="Allshire R.C."/>
        </authorList>
    </citation>
    <scope>NUCLEOTIDE SEQUENCE [MRNA]</scope>
    <source>
        <strain>972 / ATCC 24843</strain>
    </source>
</reference>
<reference key="2">
    <citation type="journal article" date="1999" name="Mol. Gen. Genet.">
        <title>The fission yeast rpa17+ gene encodes a functional homolog of AC19, a subunit of RNA polymerases I and III of Saccharomyces cerevisiae.</title>
        <authorList>
            <person name="Imai K."/>
            <person name="Imazawa Y."/>
            <person name="Yao Y."/>
            <person name="Yamamoto K."/>
            <person name="Hisatake K."/>
            <person name="Muramatsu M."/>
            <person name="Nogi Y."/>
        </authorList>
    </citation>
    <scope>NUCLEOTIDE SEQUENCE [GENOMIC DNA / MRNA]</scope>
</reference>
<reference key="3">
    <citation type="journal article" date="1998" name="Bioorg. Khim.">
        <title>Molecular cloning and characteristics of rpc19+ and rpc40+ Schizosaccharomyces pombe genes, coding for common subunits of nuclear RNA polymerase I and III.</title>
        <authorList>
            <person name="Shpakovskii G.V."/>
            <person name="Shematorova E.K."/>
        </authorList>
    </citation>
    <scope>NUCLEOTIDE SEQUENCE [MRNA]</scope>
    <source>
        <strain>972 / ATCC 24843</strain>
    </source>
</reference>
<reference key="4">
    <citation type="journal article" date="1999" name="Curr. Genet.">
        <title>Rpc19 and Rpc40, two alpha-like subunits shared by nuclear RNA polymerases I and III, are interchangeable between the fission and budding yeasts.</title>
        <authorList>
            <person name="Shpakovski G.V."/>
            <person name="Shematorova E.K."/>
        </authorList>
    </citation>
    <scope>NUCLEOTIDE SEQUENCE [GENOMIC DNA / MRNA]</scope>
    <source>
        <strain>972 / ATCC 24843</strain>
    </source>
</reference>
<reference key="5">
    <citation type="journal article" date="2002" name="Nature">
        <title>The genome sequence of Schizosaccharomyces pombe.</title>
        <authorList>
            <person name="Wood V."/>
            <person name="Gwilliam R."/>
            <person name="Rajandream M.A."/>
            <person name="Lyne M.H."/>
            <person name="Lyne R."/>
            <person name="Stewart A."/>
            <person name="Sgouros J.G."/>
            <person name="Peat N."/>
            <person name="Hayles J."/>
            <person name="Baker S.G."/>
            <person name="Basham D."/>
            <person name="Bowman S."/>
            <person name="Brooks K."/>
            <person name="Brown D."/>
            <person name="Brown S."/>
            <person name="Chillingworth T."/>
            <person name="Churcher C.M."/>
            <person name="Collins M."/>
            <person name="Connor R."/>
            <person name="Cronin A."/>
            <person name="Davis P."/>
            <person name="Feltwell T."/>
            <person name="Fraser A."/>
            <person name="Gentles S."/>
            <person name="Goble A."/>
            <person name="Hamlin N."/>
            <person name="Harris D.E."/>
            <person name="Hidalgo J."/>
            <person name="Hodgson G."/>
            <person name="Holroyd S."/>
            <person name="Hornsby T."/>
            <person name="Howarth S."/>
            <person name="Huckle E.J."/>
            <person name="Hunt S."/>
            <person name="Jagels K."/>
            <person name="James K.D."/>
            <person name="Jones L."/>
            <person name="Jones M."/>
            <person name="Leather S."/>
            <person name="McDonald S."/>
            <person name="McLean J."/>
            <person name="Mooney P."/>
            <person name="Moule S."/>
            <person name="Mungall K.L."/>
            <person name="Murphy L.D."/>
            <person name="Niblett D."/>
            <person name="Odell C."/>
            <person name="Oliver K."/>
            <person name="O'Neil S."/>
            <person name="Pearson D."/>
            <person name="Quail M.A."/>
            <person name="Rabbinowitsch E."/>
            <person name="Rutherford K.M."/>
            <person name="Rutter S."/>
            <person name="Saunders D."/>
            <person name="Seeger K."/>
            <person name="Sharp S."/>
            <person name="Skelton J."/>
            <person name="Simmonds M.N."/>
            <person name="Squares R."/>
            <person name="Squares S."/>
            <person name="Stevens K."/>
            <person name="Taylor K."/>
            <person name="Taylor R.G."/>
            <person name="Tivey A."/>
            <person name="Walsh S.V."/>
            <person name="Warren T."/>
            <person name="Whitehead S."/>
            <person name="Woodward J.R."/>
            <person name="Volckaert G."/>
            <person name="Aert R."/>
            <person name="Robben J."/>
            <person name="Grymonprez B."/>
            <person name="Weltjens I."/>
            <person name="Vanstreels E."/>
            <person name="Rieger M."/>
            <person name="Schaefer M."/>
            <person name="Mueller-Auer S."/>
            <person name="Gabel C."/>
            <person name="Fuchs M."/>
            <person name="Duesterhoeft A."/>
            <person name="Fritzc C."/>
            <person name="Holzer E."/>
            <person name="Moestl D."/>
            <person name="Hilbert H."/>
            <person name="Borzym K."/>
            <person name="Langer I."/>
            <person name="Beck A."/>
            <person name="Lehrach H."/>
            <person name="Reinhardt R."/>
            <person name="Pohl T.M."/>
            <person name="Eger P."/>
            <person name="Zimmermann W."/>
            <person name="Wedler H."/>
            <person name="Wambutt R."/>
            <person name="Purnelle B."/>
            <person name="Goffeau A."/>
            <person name="Cadieu E."/>
            <person name="Dreano S."/>
            <person name="Gloux S."/>
            <person name="Lelaure V."/>
            <person name="Mottier S."/>
            <person name="Galibert F."/>
            <person name="Aves S.J."/>
            <person name="Xiang Z."/>
            <person name="Hunt C."/>
            <person name="Moore K."/>
            <person name="Hurst S.M."/>
            <person name="Lucas M."/>
            <person name="Rochet M."/>
            <person name="Gaillardin C."/>
            <person name="Tallada V.A."/>
            <person name="Garzon A."/>
            <person name="Thode G."/>
            <person name="Daga R.R."/>
            <person name="Cruzado L."/>
            <person name="Jimenez J."/>
            <person name="Sanchez M."/>
            <person name="del Rey F."/>
            <person name="Benito J."/>
            <person name="Dominguez A."/>
            <person name="Revuelta J.L."/>
            <person name="Moreno S."/>
            <person name="Armstrong J."/>
            <person name="Forsburg S.L."/>
            <person name="Cerutti L."/>
            <person name="Lowe T."/>
            <person name="McCombie W.R."/>
            <person name="Paulsen I."/>
            <person name="Potashkin J."/>
            <person name="Shpakovski G.V."/>
            <person name="Ussery D."/>
            <person name="Barrell B.G."/>
            <person name="Nurse P."/>
        </authorList>
    </citation>
    <scope>NUCLEOTIDE SEQUENCE [LARGE SCALE GENOMIC DNA]</scope>
    <source>
        <strain>972 / ATCC 24843</strain>
    </source>
</reference>